<name>HCP_KOSOT</name>
<keyword id="KW-0004">4Fe-4S</keyword>
<keyword id="KW-0963">Cytoplasm</keyword>
<keyword id="KW-0408">Iron</keyword>
<keyword id="KW-0411">Iron-sulfur</keyword>
<keyword id="KW-0479">Metal-binding</keyword>
<keyword id="KW-0560">Oxidoreductase</keyword>
<keyword id="KW-1185">Reference proteome</keyword>
<organism>
    <name type="scientific">Kosmotoga olearia (strain ATCC BAA-1733 / DSM 21960 / TBF 19.5.1)</name>
    <dbReference type="NCBI Taxonomy" id="521045"/>
    <lineage>
        <taxon>Bacteria</taxon>
        <taxon>Thermotogati</taxon>
        <taxon>Thermotogota</taxon>
        <taxon>Thermotogae</taxon>
        <taxon>Kosmotogales</taxon>
        <taxon>Kosmotogaceae</taxon>
        <taxon>Kosmotoga</taxon>
    </lineage>
</organism>
<evidence type="ECO:0000255" key="1">
    <source>
        <dbReference type="HAMAP-Rule" id="MF_00069"/>
    </source>
</evidence>
<dbReference type="EC" id="1.7.99.1" evidence="1"/>
<dbReference type="EMBL" id="CP001634">
    <property type="protein sequence ID" value="ACR79855.1"/>
    <property type="molecule type" value="Genomic_DNA"/>
</dbReference>
<dbReference type="SMR" id="C5CIJ2"/>
<dbReference type="STRING" id="521045.Kole_1154"/>
<dbReference type="KEGG" id="kol:Kole_1154"/>
<dbReference type="eggNOG" id="COG1151">
    <property type="taxonomic scope" value="Bacteria"/>
</dbReference>
<dbReference type="HOGENOM" id="CLU_038344_2_0_0"/>
<dbReference type="Proteomes" id="UP000002382">
    <property type="component" value="Chromosome"/>
</dbReference>
<dbReference type="GO" id="GO:0005737">
    <property type="term" value="C:cytoplasm"/>
    <property type="evidence" value="ECO:0007669"/>
    <property type="project" value="UniProtKB-SubCell"/>
</dbReference>
<dbReference type="GO" id="GO:0051539">
    <property type="term" value="F:4 iron, 4 sulfur cluster binding"/>
    <property type="evidence" value="ECO:0007669"/>
    <property type="project" value="UniProtKB-KW"/>
</dbReference>
<dbReference type="GO" id="GO:0050418">
    <property type="term" value="F:hydroxylamine reductase activity"/>
    <property type="evidence" value="ECO:0007669"/>
    <property type="project" value="UniProtKB-UniRule"/>
</dbReference>
<dbReference type="GO" id="GO:0046872">
    <property type="term" value="F:metal ion binding"/>
    <property type="evidence" value="ECO:0007669"/>
    <property type="project" value="UniProtKB-KW"/>
</dbReference>
<dbReference type="GO" id="GO:0004601">
    <property type="term" value="F:peroxidase activity"/>
    <property type="evidence" value="ECO:0007669"/>
    <property type="project" value="TreeGrafter"/>
</dbReference>
<dbReference type="GO" id="GO:0042542">
    <property type="term" value="P:response to hydrogen peroxide"/>
    <property type="evidence" value="ECO:0007669"/>
    <property type="project" value="TreeGrafter"/>
</dbReference>
<dbReference type="CDD" id="cd01914">
    <property type="entry name" value="HCP"/>
    <property type="match status" value="1"/>
</dbReference>
<dbReference type="FunFam" id="1.20.1270.20:FF:000001">
    <property type="entry name" value="Hydroxylamine reductase"/>
    <property type="match status" value="1"/>
</dbReference>
<dbReference type="FunFam" id="3.40.50.2030:FF:000001">
    <property type="entry name" value="Hydroxylamine reductase"/>
    <property type="match status" value="1"/>
</dbReference>
<dbReference type="FunFam" id="3.40.50.2030:FF:000002">
    <property type="entry name" value="Hydroxylamine reductase"/>
    <property type="match status" value="1"/>
</dbReference>
<dbReference type="Gene3D" id="1.20.1270.20">
    <property type="match status" value="2"/>
</dbReference>
<dbReference type="Gene3D" id="3.40.50.2030">
    <property type="match status" value="2"/>
</dbReference>
<dbReference type="HAMAP" id="MF_00069">
    <property type="entry name" value="Hydroxylam_reduct"/>
    <property type="match status" value="1"/>
</dbReference>
<dbReference type="InterPro" id="IPR004137">
    <property type="entry name" value="HCP/CODH"/>
</dbReference>
<dbReference type="InterPro" id="IPR010048">
    <property type="entry name" value="Hydroxylam_reduct"/>
</dbReference>
<dbReference type="InterPro" id="IPR016099">
    <property type="entry name" value="Prismane-like_a/b-sand"/>
</dbReference>
<dbReference type="InterPro" id="IPR011254">
    <property type="entry name" value="Prismane-like_sf"/>
</dbReference>
<dbReference type="InterPro" id="IPR016100">
    <property type="entry name" value="Prismane_a-bundle"/>
</dbReference>
<dbReference type="NCBIfam" id="TIGR01703">
    <property type="entry name" value="hybrid_clust"/>
    <property type="match status" value="1"/>
</dbReference>
<dbReference type="NCBIfam" id="NF003658">
    <property type="entry name" value="PRK05290.1"/>
    <property type="match status" value="1"/>
</dbReference>
<dbReference type="PANTHER" id="PTHR30109">
    <property type="entry name" value="HYDROXYLAMINE REDUCTASE"/>
    <property type="match status" value="1"/>
</dbReference>
<dbReference type="PANTHER" id="PTHR30109:SF0">
    <property type="entry name" value="HYDROXYLAMINE REDUCTASE"/>
    <property type="match status" value="1"/>
</dbReference>
<dbReference type="Pfam" id="PF03063">
    <property type="entry name" value="Prismane"/>
    <property type="match status" value="1"/>
</dbReference>
<dbReference type="PIRSF" id="PIRSF000076">
    <property type="entry name" value="HCP"/>
    <property type="match status" value="1"/>
</dbReference>
<dbReference type="SUPFAM" id="SSF56821">
    <property type="entry name" value="Prismane protein-like"/>
    <property type="match status" value="1"/>
</dbReference>
<gene>
    <name evidence="1" type="primary">hcp</name>
    <name type="ordered locus">Kole_1154</name>
</gene>
<accession>C5CIJ2</accession>
<reference key="1">
    <citation type="submission" date="2009-06" db="EMBL/GenBank/DDBJ databases">
        <title>Complete sequence of Thermotogales bacterium TBF 19.5.1.</title>
        <authorList>
            <consortium name="US DOE Joint Genome Institute"/>
            <person name="Lucas S."/>
            <person name="Copeland A."/>
            <person name="Lapidus A."/>
            <person name="Glavina del Rio T."/>
            <person name="Tice H."/>
            <person name="Bruce D."/>
            <person name="Goodwin L."/>
            <person name="Pitluck S."/>
            <person name="Chertkov O."/>
            <person name="Brettin T."/>
            <person name="Detter J.C."/>
            <person name="Han C."/>
            <person name="Schmutz J."/>
            <person name="Larimer F."/>
            <person name="Land M."/>
            <person name="Hauser L."/>
            <person name="Kyrpides N."/>
            <person name="Ovchinnikova G."/>
            <person name="Noll K."/>
        </authorList>
    </citation>
    <scope>NUCLEOTIDE SEQUENCE [LARGE SCALE GENOMIC DNA]</scope>
    <source>
        <strain>ATCC BAA-1733 / DSM 21960 / TBF 19.5.1</strain>
    </source>
</reference>
<protein>
    <recommendedName>
        <fullName evidence="1">Hydroxylamine reductase</fullName>
        <ecNumber evidence="1">1.7.99.1</ecNumber>
    </recommendedName>
    <alternativeName>
        <fullName evidence="1">Hybrid-cluster protein</fullName>
        <shortName evidence="1">HCP</shortName>
    </alternativeName>
    <alternativeName>
        <fullName evidence="1">Prismane protein</fullName>
    </alternativeName>
</protein>
<feature type="chain" id="PRO_1000202438" description="Hydroxylamine reductase">
    <location>
        <begin position="1"/>
        <end position="556"/>
    </location>
</feature>
<feature type="binding site" evidence="1">
    <location>
        <position position="5"/>
    </location>
    <ligand>
        <name>[4Fe-4S] cluster</name>
        <dbReference type="ChEBI" id="CHEBI:49883"/>
    </ligand>
</feature>
<feature type="binding site" evidence="1">
    <location>
        <position position="8"/>
    </location>
    <ligand>
        <name>[4Fe-4S] cluster</name>
        <dbReference type="ChEBI" id="CHEBI:49883"/>
    </ligand>
</feature>
<feature type="binding site" evidence="1">
    <location>
        <position position="17"/>
    </location>
    <ligand>
        <name>[4Fe-4S] cluster</name>
        <dbReference type="ChEBI" id="CHEBI:49883"/>
    </ligand>
</feature>
<feature type="binding site" evidence="1">
    <location>
        <position position="23"/>
    </location>
    <ligand>
        <name>[4Fe-4S] cluster</name>
        <dbReference type="ChEBI" id="CHEBI:49883"/>
    </ligand>
</feature>
<feature type="binding site" evidence="1">
    <location>
        <position position="249"/>
    </location>
    <ligand>
        <name>hybrid [4Fe-2O-2S] cluster</name>
        <dbReference type="ChEBI" id="CHEBI:60519"/>
    </ligand>
</feature>
<feature type="binding site" evidence="1">
    <location>
        <position position="273"/>
    </location>
    <ligand>
        <name>hybrid [4Fe-2O-2S] cluster</name>
        <dbReference type="ChEBI" id="CHEBI:60519"/>
    </ligand>
</feature>
<feature type="binding site" evidence="1">
    <location>
        <position position="317"/>
    </location>
    <ligand>
        <name>hybrid [4Fe-2O-2S] cluster</name>
        <dbReference type="ChEBI" id="CHEBI:60519"/>
    </ligand>
</feature>
<feature type="binding site" description="via persulfide group" evidence="1">
    <location>
        <position position="409"/>
    </location>
    <ligand>
        <name>hybrid [4Fe-2O-2S] cluster</name>
        <dbReference type="ChEBI" id="CHEBI:60519"/>
    </ligand>
</feature>
<feature type="binding site" evidence="1">
    <location>
        <position position="437"/>
    </location>
    <ligand>
        <name>hybrid [4Fe-2O-2S] cluster</name>
        <dbReference type="ChEBI" id="CHEBI:60519"/>
    </ligand>
</feature>
<feature type="binding site" evidence="1">
    <location>
        <position position="462"/>
    </location>
    <ligand>
        <name>hybrid [4Fe-2O-2S] cluster</name>
        <dbReference type="ChEBI" id="CHEBI:60519"/>
    </ligand>
</feature>
<feature type="binding site" evidence="1">
    <location>
        <position position="497"/>
    </location>
    <ligand>
        <name>hybrid [4Fe-2O-2S] cluster</name>
        <dbReference type="ChEBI" id="CHEBI:60519"/>
    </ligand>
</feature>
<feature type="binding site" evidence="1">
    <location>
        <position position="499"/>
    </location>
    <ligand>
        <name>hybrid [4Fe-2O-2S] cluster</name>
        <dbReference type="ChEBI" id="CHEBI:60519"/>
    </ligand>
</feature>
<feature type="modified residue" description="Cysteine persulfide" evidence="1">
    <location>
        <position position="409"/>
    </location>
</feature>
<comment type="function">
    <text evidence="1">Catalyzes the reduction of hydroxylamine to form NH(3) and H(2)O.</text>
</comment>
<comment type="catalytic activity">
    <reaction evidence="1">
        <text>A + NH4(+) + H2O = hydroxylamine + AH2 + H(+)</text>
        <dbReference type="Rhea" id="RHEA:22052"/>
        <dbReference type="ChEBI" id="CHEBI:13193"/>
        <dbReference type="ChEBI" id="CHEBI:15377"/>
        <dbReference type="ChEBI" id="CHEBI:15378"/>
        <dbReference type="ChEBI" id="CHEBI:15429"/>
        <dbReference type="ChEBI" id="CHEBI:17499"/>
        <dbReference type="ChEBI" id="CHEBI:28938"/>
        <dbReference type="EC" id="1.7.99.1"/>
    </reaction>
</comment>
<comment type="cofactor">
    <cofactor evidence="1">
        <name>[4Fe-4S] cluster</name>
        <dbReference type="ChEBI" id="CHEBI:49883"/>
    </cofactor>
    <text evidence="1">Binds 1 [4Fe-4S] cluster.</text>
</comment>
<comment type="cofactor">
    <cofactor evidence="1">
        <name>hybrid [4Fe-2O-2S] cluster</name>
        <dbReference type="ChEBI" id="CHEBI:60519"/>
    </cofactor>
    <text evidence="1">Binds 1 hybrid [4Fe-2O-2S] cluster.</text>
</comment>
<comment type="subcellular location">
    <subcellularLocation>
        <location evidence="1">Cytoplasm</location>
    </subcellularLocation>
</comment>
<comment type="similarity">
    <text evidence="1">Belongs to the HCP family.</text>
</comment>
<proteinExistence type="inferred from homology"/>
<sequence>MSMFCYQCSETLNGKACTVAGVCGKDPETSNLLDLLVWVLKGISFWATEARKLGVDDPEVNLFVAEGLFTTITNVNFDPESIGKKIEKAFALRERIMKATKEAYKEQYGKEFSKEVPEAATWYVPGDLSVWELKGAEVGALSTKDEDIRSLRELLTYGLKGIAAYTDHAYILQKFNDEILHFLQEGLAATLDDSLTVNDYVALVMKAGEFAVKAMQLLDEANTSRYGNPEITEVYTGTLPGPAILVSGHDLLDLEEILKQTEGKGINVYTHGEMLPAHAYPELKKYKHLVGNYGTSWYNQQKEFAQFNGAIVMTTNCIQKPLESYKDRIFTTGLVGWPGVKHIPNRTDGGQKDFTPVIEKALELGGLEEKPGKKIVIGFAHEQTAQVADKIIEAVKAGKIKRFVVMAGCDGRAKEREYYTEMAKRLPKETVILTAGCAKYRYNMLDLGDIDGIPRVIDAGQCNDSYSLVVTALRLKEAFGLDDINDLPISYDIAWYEQKAVAVLLALLYLGVKGIRLGPVLPAFLSPNVLKVLVENFDIKPISTVEQDLELILQGK</sequence>